<protein>
    <recommendedName>
        <fullName>Perilipin-3</fullName>
    </recommendedName>
    <alternativeName>
        <fullName evidence="15">47 kDa mannose 6-phosphate receptor-binding protein</fullName>
        <shortName evidence="15">47 kDa MPR-binding protein</shortName>
    </alternativeName>
    <alternativeName>
        <fullName evidence="15">Cargo selection protein TIP47</fullName>
    </alternativeName>
    <alternativeName>
        <fullName>Mannose-6-phosphate receptor-binding protein 1</fullName>
    </alternativeName>
    <alternativeName>
        <fullName evidence="16">Placental protein 17</fullName>
        <shortName evidence="16">PP17</shortName>
    </alternativeName>
</protein>
<accession>O60664</accession>
<accession>A8K4Y9</accession>
<accession>K7EQF4</accession>
<accession>Q53G77</accession>
<accession>Q9BS03</accession>
<accession>Q9UBD7</accession>
<accession>Q9UP92</accession>
<comment type="function">
    <text evidence="8 10">Structural component of lipid droplets, which is required for the formation and maintenance of lipid storage droplets (PubMed:34077757). Required for the transport of mannose 6-phosphate receptors (MPR) from endosomes to the trans-Golgi network (PubMed:9590177).</text>
</comment>
<comment type="subunit">
    <text evidence="10">Homooligomer (PubMed:9590177). Interacts with M6PR (via the cytoplasmic domain) (PubMed:9590177). Interacts with IGF2R (via the cytoplasmic domain) (PubMed:9590177).</text>
</comment>
<comment type="subunit">
    <molecule>Isoform 2</molecule>
    <text evidence="11">May exist as a homodimer.</text>
</comment>
<comment type="interaction">
    <interactant intactId="EBI-725795">
        <id>O60664</id>
    </interactant>
    <interactant intactId="EBI-7131019">
        <id>Q8TB40</id>
        <label>ABHD4</label>
    </interactant>
    <organismsDiffer>false</organismsDiffer>
    <experiments>3</experiments>
</comment>
<comment type="interaction">
    <interactant intactId="EBI-725795">
        <id>O60664</id>
    </interactant>
    <interactant intactId="EBI-2813554">
        <id>Q8WTS1</id>
        <label>ABHD5</label>
    </interactant>
    <organismsDiffer>false</organismsDiffer>
    <experiments>3</experiments>
</comment>
<comment type="interaction">
    <interactant intactId="EBI-725795">
        <id>O60664</id>
    </interactant>
    <interactant intactId="EBI-718729">
        <id>P55212</id>
        <label>CASP6</label>
    </interactant>
    <organismsDiffer>false</organismsDiffer>
    <experiments>3</experiments>
</comment>
<comment type="interaction">
    <interactant intactId="EBI-725795">
        <id>O60664</id>
    </interactant>
    <interactant intactId="EBI-395261">
        <id>P24863</id>
        <label>CCNC</label>
    </interactant>
    <organismsDiffer>false</organismsDiffer>
    <experiments>3</experiments>
</comment>
<comment type="interaction">
    <interactant intactId="EBI-725795">
        <id>O60664</id>
    </interactant>
    <interactant intactId="EBI-749627">
        <id>Q9H444</id>
        <label>CHMP4B</label>
    </interactant>
    <organismsDiffer>false</organismsDiffer>
    <experiments>3</experiments>
</comment>
<comment type="interaction">
    <interactant intactId="EBI-725795">
        <id>O60664</id>
    </interactant>
    <interactant intactId="EBI-2548702">
        <id>Q96DZ9</id>
        <label>CMTM5</label>
    </interactant>
    <organismsDiffer>false</organismsDiffer>
    <experiments>3</experiments>
</comment>
<comment type="interaction">
    <interactant intactId="EBI-725795">
        <id>O60664</id>
    </interactant>
    <interactant intactId="EBI-11522780">
        <id>Q96DZ9-2</id>
        <label>CMTM5</label>
    </interactant>
    <organismsDiffer>false</organismsDiffer>
    <experiments>3</experiments>
</comment>
<comment type="interaction">
    <interactant intactId="EBI-725795">
        <id>O60664</id>
    </interactant>
    <interactant intactId="EBI-2680384">
        <id>Q9BQA9</id>
        <label>CYBC1</label>
    </interactant>
    <organismsDiffer>false</organismsDiffer>
    <experiments>3</experiments>
</comment>
<comment type="interaction">
    <interactant intactId="EBI-725795">
        <id>O60664</id>
    </interactant>
    <interactant intactId="EBI-9304251">
        <id>Q05329</id>
        <label>GAD2</label>
    </interactant>
    <organismsDiffer>false</organismsDiffer>
    <experiments>3</experiments>
</comment>
<comment type="interaction">
    <interactant intactId="EBI-725795">
        <id>O60664</id>
    </interactant>
    <interactant intactId="EBI-18053395">
        <id>Q7Z5P4</id>
        <label>HSD17B13</label>
    </interactant>
    <organismsDiffer>false</organismsDiffer>
    <experiments>3</experiments>
</comment>
<comment type="interaction">
    <interactant intactId="EBI-725795">
        <id>O60664</id>
    </interactant>
    <interactant intactId="EBI-21591415">
        <id>P13473-2</id>
        <label>LAMP2</label>
    </interactant>
    <organismsDiffer>false</organismsDiffer>
    <experiments>3</experiments>
</comment>
<comment type="interaction">
    <interactant intactId="EBI-725795">
        <id>O60664</id>
    </interactant>
    <interactant intactId="EBI-11024283">
        <id>Q9C0E8-2</id>
        <label>LNPK</label>
    </interactant>
    <organismsDiffer>false</organismsDiffer>
    <experiments>3</experiments>
</comment>
<comment type="interaction">
    <interactant intactId="EBI-725795">
        <id>O60664</id>
    </interactant>
    <interactant intactId="EBI-740987">
        <id>Q9NQG6</id>
        <label>MIEF1</label>
    </interactant>
    <organismsDiffer>false</organismsDiffer>
    <experiments>3</experiments>
</comment>
<comment type="interaction">
    <interactant intactId="EBI-725795">
        <id>O60664</id>
    </interactant>
    <interactant intactId="EBI-709754">
        <id>Q9HB07</id>
        <label>MYG1</label>
    </interactant>
    <organismsDiffer>false</organismsDiffer>
    <experiments>3</experiments>
</comment>
<comment type="interaction">
    <interactant intactId="EBI-725795">
        <id>O60664</id>
    </interactant>
    <interactant intactId="EBI-741171">
        <id>Q96AL5</id>
        <label>PBX3</label>
    </interactant>
    <organismsDiffer>false</organismsDiffer>
    <experiments>3</experiments>
</comment>
<comment type="interaction">
    <interactant intactId="EBI-725795">
        <id>O60664</id>
    </interactant>
    <interactant intactId="EBI-2803703">
        <id>Q9Y6X2</id>
        <label>PIAS3</label>
    </interactant>
    <organismsDiffer>false</organismsDiffer>
    <experiments>3</experiments>
</comment>
<comment type="interaction">
    <interactant intactId="EBI-725795">
        <id>O60664</id>
    </interactant>
    <interactant intactId="EBI-5280197">
        <id>O75400-2</id>
        <label>PRPF40A</label>
    </interactant>
    <organismsDiffer>false</organismsDiffer>
    <experiments>3</experiments>
</comment>
<comment type="interaction">
    <interactant intactId="EBI-725795">
        <id>O60664</id>
    </interactant>
    <interactant intactId="EBI-742898">
        <id>P43378</id>
        <label>PTPN9</label>
    </interactant>
    <organismsDiffer>false</organismsDiffer>
    <experiments>3</experiments>
</comment>
<comment type="interaction">
    <interactant intactId="EBI-725795">
        <id>O60664</id>
    </interactant>
    <interactant intactId="EBI-4402330">
        <id>O95562</id>
        <label>SFT2D2</label>
    </interactant>
    <organismsDiffer>false</organismsDiffer>
    <experiments>3</experiments>
</comment>
<comment type="interaction">
    <interactant intactId="EBI-725795">
        <id>O60664</id>
    </interactant>
    <interactant intactId="EBI-2623095">
        <id>Q9Y371</id>
        <label>SH3GLB1</label>
    </interactant>
    <organismsDiffer>false</organismsDiffer>
    <experiments>3</experiments>
</comment>
<comment type="interaction">
    <interactant intactId="EBI-725795">
        <id>O60664</id>
    </interactant>
    <interactant intactId="EBI-2822329">
        <id>Q13596</id>
        <label>SNX1</label>
    </interactant>
    <organismsDiffer>false</organismsDiffer>
    <experiments>4</experiments>
</comment>
<comment type="interaction">
    <interactant intactId="EBI-725795">
        <id>O60664</id>
    </interactant>
    <interactant intactId="EBI-1046690">
        <id>O60749</id>
        <label>SNX2</label>
    </interactant>
    <organismsDiffer>false</organismsDiffer>
    <experiments>3</experiments>
</comment>
<comment type="interaction">
    <interactant intactId="EBI-725795">
        <id>O60664</id>
    </interactant>
    <interactant intactId="EBI-12187159">
        <id>O43759-2</id>
        <label>SYNGR1</label>
    </interactant>
    <organismsDiffer>false</organismsDiffer>
    <experiments>3</experiments>
</comment>
<comment type="interaction">
    <interactant intactId="EBI-725795">
        <id>O60664</id>
    </interactant>
    <interactant intactId="EBI-11321949">
        <id>O43761</id>
        <label>SYNGR3</label>
    </interactant>
    <organismsDiffer>false</organismsDiffer>
    <experiments>3</experiments>
</comment>
<comment type="interaction">
    <interactant intactId="EBI-725795">
        <id>O60664</id>
    </interactant>
    <interactant intactId="EBI-9071725">
        <id>P08247</id>
        <label>SYP</label>
    </interactant>
    <organismsDiffer>false</organismsDiffer>
    <experiments>3</experiments>
</comment>
<comment type="interaction">
    <interactant intactId="EBI-725795">
        <id>O60664</id>
    </interactant>
    <interactant intactId="EBI-1045099">
        <id>Q9BW92</id>
        <label>TARS2</label>
    </interactant>
    <organismsDiffer>false</organismsDiffer>
    <experiments>3</experiments>
</comment>
<comment type="interaction">
    <interactant intactId="EBI-725795">
        <id>O60664</id>
    </interactant>
    <interactant intactId="EBI-12264956">
        <id>Q9NVG8</id>
        <label>TBC1D13</label>
    </interactant>
    <organismsDiffer>false</organismsDiffer>
    <experiments>3</experiments>
</comment>
<comment type="interaction">
    <interactant intactId="EBI-725795">
        <id>O60664</id>
    </interactant>
    <interactant intactId="EBI-2339195">
        <id>Q9P0S9</id>
        <label>TMEM14C</label>
    </interactant>
    <organismsDiffer>false</organismsDiffer>
    <experiments>3</experiments>
</comment>
<comment type="interaction">
    <interactant intactId="EBI-725795">
        <id>O60664</id>
    </interactant>
    <interactant intactId="EBI-6863748">
        <id>PRO_0000037551</id>
        <dbReference type="UniProtKB" id="Q9WMX2"/>
    </interactant>
    <organismsDiffer>true</organismsDiffer>
    <experiments>5</experiments>
</comment>
<comment type="subcellular location">
    <subcellularLocation>
        <location evidence="6 8 9">Lipid droplet</location>
    </subcellularLocation>
    <subcellularLocation>
        <location evidence="6">Endosome membrane</location>
        <topology evidence="6">Peripheral membrane protein</topology>
        <orientation evidence="6">Cytoplasmic side</orientation>
    </subcellularLocation>
    <subcellularLocation>
        <location evidence="6 7 10">Cytoplasm</location>
    </subcellularLocation>
    <text evidence="6">Membrane associated on endosomes (PubMed:15545278). Detected in the envelope and the core of lipid bodies and in lipid sails (PubMed:15545278).</text>
</comment>
<comment type="alternative products">
    <event type="alternative splicing"/>
    <isoform>
        <id>O60664-1</id>
        <name>1</name>
        <name evidence="16">PP17b</name>
        <sequence type="displayed"/>
    </isoform>
    <isoform>
        <id>O60664-2</id>
        <name>2</name>
        <name evidence="16">PP17a</name>
        <sequence type="described" ref="VSP_004664"/>
    </isoform>
    <isoform>
        <id>O60664-3</id>
        <name>3</name>
        <sequence type="described" ref="VSP_040325"/>
    </isoform>
    <isoform>
        <id>O60664-4</id>
        <name>4</name>
        <sequence type="described" ref="VSP_047038"/>
    </isoform>
</comment>
<comment type="PTM">
    <text evidence="8">Phosphorylation at Tyr-251 by isoform 1 of CHKA (CHKalpha2) promotes dissociation from lipid droplets: dissociation is followed by recruitment of autophagosome machinery to lipid droplets and subsequent lipid droplet lipolysis.</text>
</comment>
<comment type="similarity">
    <text evidence="18">Belongs to the perilipin family.</text>
</comment>
<proteinExistence type="evidence at protein level"/>
<feature type="initiator methionine" description="Removed" evidence="20 23 24">
    <location>
        <position position="1"/>
    </location>
</feature>
<feature type="chain" id="PRO_0000099890" description="Perilipin-3">
    <location>
        <begin position="2"/>
        <end position="434"/>
    </location>
</feature>
<feature type="region of interest" description="Disordered" evidence="2">
    <location>
        <begin position="1"/>
        <end position="22"/>
    </location>
</feature>
<feature type="coiled-coil region" evidence="1">
    <location>
        <begin position="252"/>
        <end position="277"/>
    </location>
</feature>
<feature type="coiled-coil region" evidence="1">
    <location>
        <begin position="353"/>
        <end position="377"/>
    </location>
</feature>
<feature type="modified residue" description="N-acetylserine" evidence="20 23 24">
    <location>
        <position position="2"/>
    </location>
</feature>
<feature type="modified residue" description="Phosphoserine" evidence="25">
    <location>
        <position position="31"/>
    </location>
</feature>
<feature type="modified residue" description="N6-acetyllysine" evidence="21">
    <location>
        <position position="65"/>
    </location>
</feature>
<feature type="modified residue" description="Phosphoserine" evidence="25">
    <location>
        <position position="91"/>
    </location>
</feature>
<feature type="modified residue" description="Phosphoserine" evidence="19 22 25">
    <location>
        <position position="130"/>
    </location>
</feature>
<feature type="modified residue" description="Phosphoserine" evidence="25">
    <location>
        <position position="148"/>
    </location>
</feature>
<feature type="modified residue" description="Phosphothreonine" evidence="19">
    <location>
        <position position="170"/>
    </location>
</feature>
<feature type="modified residue" description="Phosphoserine" evidence="19">
    <location>
        <position position="175"/>
    </location>
</feature>
<feature type="modified residue" description="Phosphoserine" evidence="19">
    <location>
        <position position="179"/>
    </location>
</feature>
<feature type="modified residue" description="Phosphothreonine" evidence="25">
    <location>
        <position position="216"/>
    </location>
</feature>
<feature type="modified residue" description="Phosphoserine" evidence="25">
    <location>
        <position position="217"/>
    </location>
</feature>
<feature type="modified residue" description="Phosphoserine" evidence="25">
    <location>
        <position position="241"/>
    </location>
</feature>
<feature type="modified residue" description="Phosphotyrosine" evidence="8">
    <location>
        <position position="251"/>
    </location>
</feature>
<feature type="cross-link" description="Glycyl lysine isopeptide (Lys-Gly) (interchain with G-Cter in SUMO1)" evidence="26">
    <location>
        <position position="122"/>
    </location>
</feature>
<feature type="splice variant" id="VSP_004664" description="In isoform 2." evidence="14 16">
    <location>
        <begin position="1"/>
        <end position="183"/>
    </location>
</feature>
<feature type="splice variant" id="VSP_047038" description="In isoform 4." evidence="18">
    <location>
        <begin position="116"/>
        <end position="127"/>
    </location>
</feature>
<feature type="splice variant" id="VSP_040325" description="In isoform 3." evidence="17">
    <location>
        <position position="321"/>
    </location>
</feature>
<feature type="sequence variant" id="VAR_022780" description="In dbSNP:rs8289." evidence="3 5 10 11">
    <original>I</original>
    <variation>V</variation>
    <location>
        <position position="56"/>
    </location>
</feature>
<feature type="sequence variant" id="VAR_024559" description="In dbSNP:rs9973235." evidence="3 4 5 10 11 12 13">
    <original>V</original>
    <variation>A</variation>
    <location>
        <position position="275"/>
    </location>
</feature>
<feature type="mutagenesis site" description="Abolished phosphorylation at Tyr-232 by isoform 1 of CHKA (CHKalpha2)." evidence="8">
    <original>Y</original>
    <variation>F</variation>
    <location>
        <position position="251"/>
    </location>
</feature>
<feature type="sequence conflict" description="In Ref. 2; AAD11622." evidence="18" ref="2">
    <original>G</original>
    <variation>W</variation>
    <location>
        <position position="77"/>
    </location>
</feature>
<feature type="sequence conflict" description="In Ref. 2; AAD11622." evidence="18" ref="2">
    <original>ILQ</original>
    <variation>MLR</variation>
    <location>
        <begin position="109"/>
        <end position="111"/>
    </location>
</feature>
<name>PLIN3_HUMAN</name>
<gene>
    <name type="primary">PLIN3</name>
    <name type="synonym">M6PRBP1</name>
    <name evidence="15" type="synonym">TIP47</name>
</gene>
<reference key="1">
    <citation type="journal article" date="1998" name="Cell">
        <title>TIP47: a cargo selection device for mannose 6-phosphate receptor trafficking.</title>
        <authorList>
            <person name="Diaz E."/>
            <person name="Pfeffer S.R."/>
        </authorList>
    </citation>
    <scope>NUCLEOTIDE SEQUENCE [MRNA] (ISOFORM 1)</scope>
    <scope>VARIANTS VAL-56 AND ALA-275</scope>
    <scope>FUNCTION</scope>
    <scope>INTERACTION WITH M6PR AND IGF2R</scope>
    <scope>HOMOOLIGOMERIZATION</scope>
    <scope>SUBCELLULAR LOCATION</scope>
</reference>
<reference key="2">
    <citation type="journal article" date="1998" name="Eur. J. Biochem.">
        <title>Cloning and sequence analysis of cDNAs encoding human placental tissue protein 17 (PP17) variants.</title>
        <authorList>
            <person name="Than N.G."/>
            <person name="Sumegi B."/>
            <person name="Than G.N."/>
            <person name="Kispal G."/>
            <person name="Bohn H."/>
        </authorList>
    </citation>
    <scope>NUCLEOTIDE SEQUENCE [MRNA] (ISOFORMS 1 AND 2)</scope>
    <scope>VARIANTS VAL-56 AND ALA-275</scope>
    <source>
        <tissue>Placenta</tissue>
    </source>
</reference>
<reference key="3">
    <citation type="journal article" date="1999" name="Tumor Biol.">
        <title>Cloning and sequencing of human oncodevelopmental soluble placental tissue protein 17 (PP17): homology with adipophilin and the mouse adipose differentiation-related protein.</title>
        <authorList>
            <person name="Than N.G."/>
            <person name="Sumegi B."/>
            <person name="Than G.N."/>
            <person name="Kispal G."/>
            <person name="Bohn H."/>
        </authorList>
    </citation>
    <scope>NUCLEOTIDE SEQUENCE [MRNA] (ISOFORMS 1 AND 2)</scope>
    <scope>SUBUNIT (ISOFORM 2)</scope>
    <scope>VARIANTS VAL-56 AND ALA-275</scope>
    <source>
        <tissue>Placenta</tissue>
    </source>
</reference>
<reference key="4">
    <citation type="submission" date="2003-05" db="EMBL/GenBank/DDBJ databases">
        <title>Cloning of human full-length CDSs in BD Creator(TM) system donor vector.</title>
        <authorList>
            <person name="Kalnine N."/>
            <person name="Chen X."/>
            <person name="Rolfs A."/>
            <person name="Halleck A."/>
            <person name="Hines L."/>
            <person name="Eisenstein S."/>
            <person name="Koundinya M."/>
            <person name="Raphael J."/>
            <person name="Moreira D."/>
            <person name="Kelley T."/>
            <person name="LaBaer J."/>
            <person name="Lin Y."/>
            <person name="Phelan M."/>
            <person name="Farmer A."/>
        </authorList>
    </citation>
    <scope>NUCLEOTIDE SEQUENCE [LARGE SCALE MRNA] (ISOFORM 1)</scope>
    <scope>VARIANT ALA-275</scope>
</reference>
<reference key="5">
    <citation type="journal article" date="2004" name="Nat. Genet.">
        <title>Complete sequencing and characterization of 21,243 full-length human cDNAs.</title>
        <authorList>
            <person name="Ota T."/>
            <person name="Suzuki Y."/>
            <person name="Nishikawa T."/>
            <person name="Otsuki T."/>
            <person name="Sugiyama T."/>
            <person name="Irie R."/>
            <person name="Wakamatsu A."/>
            <person name="Hayashi K."/>
            <person name="Sato H."/>
            <person name="Nagai K."/>
            <person name="Kimura K."/>
            <person name="Makita H."/>
            <person name="Sekine M."/>
            <person name="Obayashi M."/>
            <person name="Nishi T."/>
            <person name="Shibahara T."/>
            <person name="Tanaka T."/>
            <person name="Ishii S."/>
            <person name="Yamamoto J."/>
            <person name="Saito K."/>
            <person name="Kawai Y."/>
            <person name="Isono Y."/>
            <person name="Nakamura Y."/>
            <person name="Nagahari K."/>
            <person name="Murakami K."/>
            <person name="Yasuda T."/>
            <person name="Iwayanagi T."/>
            <person name="Wagatsuma M."/>
            <person name="Shiratori A."/>
            <person name="Sudo H."/>
            <person name="Hosoiri T."/>
            <person name="Kaku Y."/>
            <person name="Kodaira H."/>
            <person name="Kondo H."/>
            <person name="Sugawara M."/>
            <person name="Takahashi M."/>
            <person name="Kanda K."/>
            <person name="Yokoi T."/>
            <person name="Furuya T."/>
            <person name="Kikkawa E."/>
            <person name="Omura Y."/>
            <person name="Abe K."/>
            <person name="Kamihara K."/>
            <person name="Katsuta N."/>
            <person name="Sato K."/>
            <person name="Tanikawa M."/>
            <person name="Yamazaki M."/>
            <person name="Ninomiya K."/>
            <person name="Ishibashi T."/>
            <person name="Yamashita H."/>
            <person name="Murakawa K."/>
            <person name="Fujimori K."/>
            <person name="Tanai H."/>
            <person name="Kimata M."/>
            <person name="Watanabe M."/>
            <person name="Hiraoka S."/>
            <person name="Chiba Y."/>
            <person name="Ishida S."/>
            <person name="Ono Y."/>
            <person name="Takiguchi S."/>
            <person name="Watanabe S."/>
            <person name="Yosida M."/>
            <person name="Hotuta T."/>
            <person name="Kusano J."/>
            <person name="Kanehori K."/>
            <person name="Takahashi-Fujii A."/>
            <person name="Hara H."/>
            <person name="Tanase T.-O."/>
            <person name="Nomura Y."/>
            <person name="Togiya S."/>
            <person name="Komai F."/>
            <person name="Hara R."/>
            <person name="Takeuchi K."/>
            <person name="Arita M."/>
            <person name="Imose N."/>
            <person name="Musashino K."/>
            <person name="Yuuki H."/>
            <person name="Oshima A."/>
            <person name="Sasaki N."/>
            <person name="Aotsuka S."/>
            <person name="Yoshikawa Y."/>
            <person name="Matsunawa H."/>
            <person name="Ichihara T."/>
            <person name="Shiohata N."/>
            <person name="Sano S."/>
            <person name="Moriya S."/>
            <person name="Momiyama H."/>
            <person name="Satoh N."/>
            <person name="Takami S."/>
            <person name="Terashima Y."/>
            <person name="Suzuki O."/>
            <person name="Nakagawa S."/>
            <person name="Senoh A."/>
            <person name="Mizoguchi H."/>
            <person name="Goto Y."/>
            <person name="Shimizu F."/>
            <person name="Wakebe H."/>
            <person name="Hishigaki H."/>
            <person name="Watanabe T."/>
            <person name="Sugiyama A."/>
            <person name="Takemoto M."/>
            <person name="Kawakami B."/>
            <person name="Yamazaki M."/>
            <person name="Watanabe K."/>
            <person name="Kumagai A."/>
            <person name="Itakura S."/>
            <person name="Fukuzumi Y."/>
            <person name="Fujimori Y."/>
            <person name="Komiyama M."/>
            <person name="Tashiro H."/>
            <person name="Tanigami A."/>
            <person name="Fujiwara T."/>
            <person name="Ono T."/>
            <person name="Yamada K."/>
            <person name="Fujii Y."/>
            <person name="Ozaki K."/>
            <person name="Hirao M."/>
            <person name="Ohmori Y."/>
            <person name="Kawabata A."/>
            <person name="Hikiji T."/>
            <person name="Kobatake N."/>
            <person name="Inagaki H."/>
            <person name="Ikema Y."/>
            <person name="Okamoto S."/>
            <person name="Okitani R."/>
            <person name="Kawakami T."/>
            <person name="Noguchi S."/>
            <person name="Itoh T."/>
            <person name="Shigeta K."/>
            <person name="Senba T."/>
            <person name="Matsumura K."/>
            <person name="Nakajima Y."/>
            <person name="Mizuno T."/>
            <person name="Morinaga M."/>
            <person name="Sasaki M."/>
            <person name="Togashi T."/>
            <person name="Oyama M."/>
            <person name="Hata H."/>
            <person name="Watanabe M."/>
            <person name="Komatsu T."/>
            <person name="Mizushima-Sugano J."/>
            <person name="Satoh T."/>
            <person name="Shirai Y."/>
            <person name="Takahashi Y."/>
            <person name="Nakagawa K."/>
            <person name="Okumura K."/>
            <person name="Nagase T."/>
            <person name="Nomura N."/>
            <person name="Kikuchi H."/>
            <person name="Masuho Y."/>
            <person name="Yamashita R."/>
            <person name="Nakai K."/>
            <person name="Yada T."/>
            <person name="Nakamura Y."/>
            <person name="Ohara O."/>
            <person name="Isogai T."/>
            <person name="Sugano S."/>
        </authorList>
    </citation>
    <scope>NUCLEOTIDE SEQUENCE [LARGE SCALE MRNA] (ISOFORM 1)</scope>
    <scope>VARIANT ALA-275</scope>
</reference>
<reference key="6">
    <citation type="submission" date="2005-04" db="EMBL/GenBank/DDBJ databases">
        <authorList>
            <person name="Suzuki Y."/>
            <person name="Sugano S."/>
            <person name="Totoki Y."/>
            <person name="Toyoda A."/>
            <person name="Takeda T."/>
            <person name="Sakaki Y."/>
            <person name="Tanaka A."/>
            <person name="Yokoyama S."/>
        </authorList>
    </citation>
    <scope>NUCLEOTIDE SEQUENCE [LARGE SCALE MRNA] (ISOFORM 3)</scope>
    <scope>VARIANT ALA-275</scope>
</reference>
<reference key="7">
    <citation type="journal article" date="2004" name="Nature">
        <title>The DNA sequence and biology of human chromosome 19.</title>
        <authorList>
            <person name="Grimwood J."/>
            <person name="Gordon L.A."/>
            <person name="Olsen A.S."/>
            <person name="Terry A."/>
            <person name="Schmutz J."/>
            <person name="Lamerdin J.E."/>
            <person name="Hellsten U."/>
            <person name="Goodstein D."/>
            <person name="Couronne O."/>
            <person name="Tran-Gyamfi M."/>
            <person name="Aerts A."/>
            <person name="Altherr M."/>
            <person name="Ashworth L."/>
            <person name="Bajorek E."/>
            <person name="Black S."/>
            <person name="Branscomb E."/>
            <person name="Caenepeel S."/>
            <person name="Carrano A.V."/>
            <person name="Caoile C."/>
            <person name="Chan Y.M."/>
            <person name="Christensen M."/>
            <person name="Cleland C.A."/>
            <person name="Copeland A."/>
            <person name="Dalin E."/>
            <person name="Dehal P."/>
            <person name="Denys M."/>
            <person name="Detter J.C."/>
            <person name="Escobar J."/>
            <person name="Flowers D."/>
            <person name="Fotopulos D."/>
            <person name="Garcia C."/>
            <person name="Georgescu A.M."/>
            <person name="Glavina T."/>
            <person name="Gomez M."/>
            <person name="Gonzales E."/>
            <person name="Groza M."/>
            <person name="Hammon N."/>
            <person name="Hawkins T."/>
            <person name="Haydu L."/>
            <person name="Ho I."/>
            <person name="Huang W."/>
            <person name="Israni S."/>
            <person name="Jett J."/>
            <person name="Kadner K."/>
            <person name="Kimball H."/>
            <person name="Kobayashi A."/>
            <person name="Larionov V."/>
            <person name="Leem S.-H."/>
            <person name="Lopez F."/>
            <person name="Lou Y."/>
            <person name="Lowry S."/>
            <person name="Malfatti S."/>
            <person name="Martinez D."/>
            <person name="McCready P.M."/>
            <person name="Medina C."/>
            <person name="Morgan J."/>
            <person name="Nelson K."/>
            <person name="Nolan M."/>
            <person name="Ovcharenko I."/>
            <person name="Pitluck S."/>
            <person name="Pollard M."/>
            <person name="Popkie A.P."/>
            <person name="Predki P."/>
            <person name="Quan G."/>
            <person name="Ramirez L."/>
            <person name="Rash S."/>
            <person name="Retterer J."/>
            <person name="Rodriguez A."/>
            <person name="Rogers S."/>
            <person name="Salamov A."/>
            <person name="Salazar A."/>
            <person name="She X."/>
            <person name="Smith D."/>
            <person name="Slezak T."/>
            <person name="Solovyev V."/>
            <person name="Thayer N."/>
            <person name="Tice H."/>
            <person name="Tsai M."/>
            <person name="Ustaszewska A."/>
            <person name="Vo N."/>
            <person name="Wagner M."/>
            <person name="Wheeler J."/>
            <person name="Wu K."/>
            <person name="Xie G."/>
            <person name="Yang J."/>
            <person name="Dubchak I."/>
            <person name="Furey T.S."/>
            <person name="DeJong P."/>
            <person name="Dickson M."/>
            <person name="Gordon D."/>
            <person name="Eichler E.E."/>
            <person name="Pennacchio L.A."/>
            <person name="Richardson P."/>
            <person name="Stubbs L."/>
            <person name="Rokhsar D.S."/>
            <person name="Myers R.M."/>
            <person name="Rubin E.M."/>
            <person name="Lucas S.M."/>
        </authorList>
    </citation>
    <scope>NUCLEOTIDE SEQUENCE [LARGE SCALE GENOMIC DNA]</scope>
</reference>
<reference key="8">
    <citation type="journal article" date="2004" name="Genome Res.">
        <title>The status, quality, and expansion of the NIH full-length cDNA project: the Mammalian Gene Collection (MGC).</title>
        <authorList>
            <consortium name="The MGC Project Team"/>
        </authorList>
    </citation>
    <scope>NUCLEOTIDE SEQUENCE [LARGE SCALE MRNA] (ISOFORM 1)</scope>
    <scope>VARIANTS VAL-56 AND ALA-275</scope>
    <source>
        <tissue>Colon</tissue>
        <tissue>Muscle</tissue>
    </source>
</reference>
<reference key="9">
    <citation type="journal article" date="1983" name="Oncodev. Biol. Med.">
        <title>Purification and characterization of two new soluble placental tissue proteins (PP13 and PP17).</title>
        <authorList>
            <person name="Bohn H."/>
            <person name="Kraus W."/>
            <person name="Winckler W."/>
        </authorList>
    </citation>
    <scope>CHARACTERIZATION</scope>
    <source>
        <tissue>Placenta</tissue>
    </source>
</reference>
<reference key="10">
    <citation type="journal article" date="2005" name="J. Biol. Chem.">
        <title>Spatial integration of TIP47 and adipophilin in macrophage lipid bodies.</title>
        <authorList>
            <person name="Robenek H."/>
            <person name="Lorkowski S."/>
            <person name="Schnoor M."/>
            <person name="Troyer D."/>
        </authorList>
    </citation>
    <scope>SUBCELLULAR LOCATION</scope>
</reference>
<reference key="11">
    <citation type="journal article" date="2008" name="Proc. Natl. Acad. Sci. U.S.A.">
        <title>A quantitative atlas of mitotic phosphorylation.</title>
        <authorList>
            <person name="Dephoure N."/>
            <person name="Zhou C."/>
            <person name="Villen J."/>
            <person name="Beausoleil S.A."/>
            <person name="Bakalarski C.E."/>
            <person name="Elledge S.J."/>
            <person name="Gygi S.P."/>
        </authorList>
    </citation>
    <scope>PHOSPHORYLATION [LARGE SCALE ANALYSIS] AT SER-130; THR-170; SER-175 AND SER-179</scope>
    <scope>IDENTIFICATION BY MASS SPECTROMETRY [LARGE SCALE ANALYSIS]</scope>
    <source>
        <tissue>Cervix carcinoma</tissue>
    </source>
</reference>
<reference key="12">
    <citation type="journal article" date="2009" name="Anal. Chem.">
        <title>Lys-N and trypsin cover complementary parts of the phosphoproteome in a refined SCX-based approach.</title>
        <authorList>
            <person name="Gauci S."/>
            <person name="Helbig A.O."/>
            <person name="Slijper M."/>
            <person name="Krijgsveld J."/>
            <person name="Heck A.J."/>
            <person name="Mohammed S."/>
        </authorList>
    </citation>
    <scope>ACETYLATION [LARGE SCALE ANALYSIS] AT SER-2</scope>
    <scope>CLEAVAGE OF INITIATOR METHIONINE [LARGE SCALE ANALYSIS]</scope>
    <scope>IDENTIFICATION BY MASS SPECTROMETRY [LARGE SCALE ANALYSIS]</scope>
</reference>
<reference key="13">
    <citation type="journal article" date="2009" name="Science">
        <title>Lysine acetylation targets protein complexes and co-regulates major cellular functions.</title>
        <authorList>
            <person name="Choudhary C."/>
            <person name="Kumar C."/>
            <person name="Gnad F."/>
            <person name="Nielsen M.L."/>
            <person name="Rehman M."/>
            <person name="Walther T.C."/>
            <person name="Olsen J.V."/>
            <person name="Mann M."/>
        </authorList>
    </citation>
    <scope>ACETYLATION [LARGE SCALE ANALYSIS] AT LYS-65</scope>
    <scope>IDENTIFICATION BY MASS SPECTROMETRY [LARGE SCALE ANALYSIS]</scope>
</reference>
<reference key="14">
    <citation type="journal article" date="2010" name="Sci. Signal.">
        <title>Quantitative phosphoproteomics reveals widespread full phosphorylation site occupancy during mitosis.</title>
        <authorList>
            <person name="Olsen J.V."/>
            <person name="Vermeulen M."/>
            <person name="Santamaria A."/>
            <person name="Kumar C."/>
            <person name="Miller M.L."/>
            <person name="Jensen L.J."/>
            <person name="Gnad F."/>
            <person name="Cox J."/>
            <person name="Jensen T.S."/>
            <person name="Nigg E.A."/>
            <person name="Brunak S."/>
            <person name="Mann M."/>
        </authorList>
    </citation>
    <scope>PHOSPHORYLATION [LARGE SCALE ANALYSIS] AT SER-130</scope>
    <scope>IDENTIFICATION BY MASS SPECTROMETRY [LARGE SCALE ANALYSIS]</scope>
    <source>
        <tissue>Cervix carcinoma</tissue>
    </source>
</reference>
<reference key="15">
    <citation type="journal article" date="2011" name="BMC Syst. Biol.">
        <title>Initial characterization of the human central proteome.</title>
        <authorList>
            <person name="Burkard T.R."/>
            <person name="Planyavsky M."/>
            <person name="Kaupe I."/>
            <person name="Breitwieser F.P."/>
            <person name="Buerckstuemmer T."/>
            <person name="Bennett K.L."/>
            <person name="Superti-Furga G."/>
            <person name="Colinge J."/>
        </authorList>
    </citation>
    <scope>IDENTIFICATION BY MASS SPECTROMETRY [LARGE SCALE ANALYSIS]</scope>
</reference>
<reference key="16">
    <citation type="journal article" date="2012" name="Mol. Cell. Proteomics">
        <title>Comparative large-scale characterisation of plant vs. mammal proteins reveals similar and idiosyncratic N-alpha acetylation features.</title>
        <authorList>
            <person name="Bienvenut W.V."/>
            <person name="Sumpton D."/>
            <person name="Martinez A."/>
            <person name="Lilla S."/>
            <person name="Espagne C."/>
            <person name="Meinnel T."/>
            <person name="Giglione C."/>
        </authorList>
    </citation>
    <scope>ACETYLATION [LARGE SCALE ANALYSIS] AT SER-2</scope>
    <scope>CLEAVAGE OF INITIATOR METHIONINE [LARGE SCALE ANALYSIS]</scope>
    <scope>IDENTIFICATION BY MASS SPECTROMETRY [LARGE SCALE ANALYSIS]</scope>
</reference>
<reference key="17">
    <citation type="journal article" date="2012" name="Proc. Natl. Acad. Sci. U.S.A.">
        <title>N-terminal acetylome analyses and functional insights of the N-terminal acetyltransferase NatB.</title>
        <authorList>
            <person name="Van Damme P."/>
            <person name="Lasa M."/>
            <person name="Polevoda B."/>
            <person name="Gazquez C."/>
            <person name="Elosegui-Artola A."/>
            <person name="Kim D.S."/>
            <person name="De Juan-Pardo E."/>
            <person name="Demeyer K."/>
            <person name="Hole K."/>
            <person name="Larrea E."/>
            <person name="Timmerman E."/>
            <person name="Prieto J."/>
            <person name="Arnesen T."/>
            <person name="Sherman F."/>
            <person name="Gevaert K."/>
            <person name="Aldabe R."/>
        </authorList>
    </citation>
    <scope>ACETYLATION [LARGE SCALE ANALYSIS] AT SER-2</scope>
    <scope>CLEAVAGE OF INITIATOR METHIONINE [LARGE SCALE ANALYSIS]</scope>
    <scope>IDENTIFICATION BY MASS SPECTROMETRY [LARGE SCALE ANALYSIS]</scope>
</reference>
<reference key="18">
    <citation type="journal article" date="2013" name="J. Proteome Res.">
        <title>Toward a comprehensive characterization of a human cancer cell phosphoproteome.</title>
        <authorList>
            <person name="Zhou H."/>
            <person name="Di Palma S."/>
            <person name="Preisinger C."/>
            <person name="Peng M."/>
            <person name="Polat A.N."/>
            <person name="Heck A.J."/>
            <person name="Mohammed S."/>
        </authorList>
    </citation>
    <scope>PHOSPHORYLATION [LARGE SCALE ANALYSIS] AT SER-31; SER-91; SER-130; SER-148; THR-216; SER-217 AND SER-241</scope>
    <scope>IDENTIFICATION BY MASS SPECTROMETRY [LARGE SCALE ANALYSIS]</scope>
    <source>
        <tissue>Cervix carcinoma</tissue>
        <tissue>Erythroleukemia</tissue>
    </source>
</reference>
<reference key="19">
    <citation type="journal article" date="2014" name="J. Proteomics">
        <title>An enzyme assisted RP-RPLC approach for in-depth analysis of human liver phosphoproteome.</title>
        <authorList>
            <person name="Bian Y."/>
            <person name="Song C."/>
            <person name="Cheng K."/>
            <person name="Dong M."/>
            <person name="Wang F."/>
            <person name="Huang J."/>
            <person name="Sun D."/>
            <person name="Wang L."/>
            <person name="Ye M."/>
            <person name="Zou H."/>
        </authorList>
    </citation>
    <scope>IDENTIFICATION BY MASS SPECTROMETRY [LARGE SCALE ANALYSIS]</scope>
    <source>
        <tissue>Liver</tissue>
    </source>
</reference>
<reference key="20">
    <citation type="journal article" date="2014" name="Proc. Natl. Acad. Sci. U.S.A.">
        <title>Mapping of SUMO sites and analysis of SUMOylation changes induced by external stimuli.</title>
        <authorList>
            <person name="Impens F."/>
            <person name="Radoshevich L."/>
            <person name="Cossart P."/>
            <person name="Ribet D."/>
        </authorList>
    </citation>
    <scope>SUMOYLATION [LARGE SCALE ANALYSIS] AT LYS-122</scope>
    <scope>IDENTIFICATION BY MASS SPECTROMETRY [LARGE SCALE ANALYSIS]</scope>
</reference>
<reference key="21">
    <citation type="journal article" date="2015" name="PeerJ">
        <title>Perilipin-related protein regulates lipid metabolism in C. elegans.</title>
        <authorList>
            <person name="Chughtai A.A."/>
            <person name="Kassak F."/>
            <person name="Kostrouchova M."/>
            <person name="Novotny J.P."/>
            <person name="Krause M.W."/>
            <person name="Saudek V."/>
            <person name="Kostrouch Z."/>
            <person name="Kostrouchova M."/>
        </authorList>
    </citation>
    <scope>SUBCELLULAR LOCATION</scope>
</reference>
<reference key="22">
    <citation type="journal article" date="2015" name="Proteomics">
        <title>N-terminome analysis of the human mitochondrial proteome.</title>
        <authorList>
            <person name="Vaca Jacome A.S."/>
            <person name="Rabilloud T."/>
            <person name="Schaeffer-Reiss C."/>
            <person name="Rompais M."/>
            <person name="Ayoub D."/>
            <person name="Lane L."/>
            <person name="Bairoch A."/>
            <person name="Van Dorsselaer A."/>
            <person name="Carapito C."/>
        </authorList>
    </citation>
    <scope>IDENTIFICATION BY MASS SPECTROMETRY [LARGE SCALE ANALYSIS]</scope>
</reference>
<reference key="23">
    <citation type="journal article" date="2021" name="Mol. Cell">
        <title>Choline kinase alpha 2 acts as a protein kinase to promote lipolysis of lipid droplets.</title>
        <authorList>
            <person name="Liu R."/>
            <person name="Lee J.H."/>
            <person name="Li J."/>
            <person name="Yu R."/>
            <person name="Tan L."/>
            <person name="Xia Y."/>
            <person name="Zheng Y."/>
            <person name="Bian X.L."/>
            <person name="Lorenzi P.L."/>
            <person name="Chen Q."/>
            <person name="Lu Z."/>
        </authorList>
    </citation>
    <scope>FUNCTION</scope>
    <scope>SUBCELLULAR LOCATION</scope>
    <scope>PHOSPHORYLATION AT TYR-251</scope>
    <scope>MUTAGENESIS OF TYR-251</scope>
</reference>
<reference key="24">
    <citation type="journal article" date="2023" name="Nat. Cell Biol.">
        <title>The Troyer syndrome protein spartin mediates selective autophagy of lipid droplets.</title>
        <authorList>
            <person name="Chung J."/>
            <person name="Park J."/>
            <person name="Lai Z.W."/>
            <person name="Lambert T.J."/>
            <person name="Richards R.C."/>
            <person name="Zhang J."/>
            <person name="Walther T.C."/>
            <person name="Farese R.V. Jr."/>
        </authorList>
    </citation>
    <scope>SUBCELLULAR LOCATION</scope>
</reference>
<organism>
    <name type="scientific">Homo sapiens</name>
    <name type="common">Human</name>
    <dbReference type="NCBI Taxonomy" id="9606"/>
    <lineage>
        <taxon>Eukaryota</taxon>
        <taxon>Metazoa</taxon>
        <taxon>Chordata</taxon>
        <taxon>Craniata</taxon>
        <taxon>Vertebrata</taxon>
        <taxon>Euteleostomi</taxon>
        <taxon>Mammalia</taxon>
        <taxon>Eutheria</taxon>
        <taxon>Euarchontoglires</taxon>
        <taxon>Primates</taxon>
        <taxon>Haplorrhini</taxon>
        <taxon>Catarrhini</taxon>
        <taxon>Hominidae</taxon>
        <taxon>Homo</taxon>
    </lineage>
</organism>
<sequence length="434" mass="47075">MSADGAEADGSTQVTVEEPVQQPSVVDRVASMPLISSTCDMVSAAYASTKESYPHIKTVCDAAEKGVRTLTAAAVSGAQPILSKLEPQIASASEYAHRGLDKLEENLPILQQPTEKVLADTKELVSSKVSGAQEMVSSAKDTVATQLSEAVDATRGAVQSGVDKTKSVVTGGVQSVMGSRLGQMVLSGVDTVLGKSEEWADNHLPLTDAELARIATSLDGFDVASVQQQRQEQSYFVRLGSLSERLRQHAYEHSLGKLRATKQRAQEALLQLSQVLSLMETVKQGVDQKLVEGQEKLHQMWLSWNQKQLQGPEKEPPKPEQVESRALTMFRDIAQQLQATCTSLGSSIQGLPTNVKDQVQQARRQVEDLQATFSSIHSFQDLSSSILAQSRERVASAREALDHMVEYVAQNTPVTWLVGPFAPGITEKAPEEKK</sequence>
<evidence type="ECO:0000255" key="1"/>
<evidence type="ECO:0000256" key="2">
    <source>
        <dbReference type="SAM" id="MobiDB-lite"/>
    </source>
</evidence>
<evidence type="ECO:0000269" key="3">
    <source>
    </source>
</evidence>
<evidence type="ECO:0000269" key="4">
    <source>
    </source>
</evidence>
<evidence type="ECO:0000269" key="5">
    <source>
    </source>
</evidence>
<evidence type="ECO:0000269" key="6">
    <source>
    </source>
</evidence>
<evidence type="ECO:0000269" key="7">
    <source>
    </source>
</evidence>
<evidence type="ECO:0000269" key="8">
    <source>
    </source>
</evidence>
<evidence type="ECO:0000269" key="9">
    <source>
    </source>
</evidence>
<evidence type="ECO:0000269" key="10">
    <source>
    </source>
</evidence>
<evidence type="ECO:0000269" key="11">
    <source>
    </source>
</evidence>
<evidence type="ECO:0000269" key="12">
    <source ref="4"/>
</evidence>
<evidence type="ECO:0000269" key="13">
    <source ref="6"/>
</evidence>
<evidence type="ECO:0000303" key="14">
    <source>
    </source>
</evidence>
<evidence type="ECO:0000303" key="15">
    <source>
    </source>
</evidence>
<evidence type="ECO:0000303" key="16">
    <source>
    </source>
</evidence>
<evidence type="ECO:0000303" key="17">
    <source ref="6"/>
</evidence>
<evidence type="ECO:0000305" key="18"/>
<evidence type="ECO:0007744" key="19">
    <source>
    </source>
</evidence>
<evidence type="ECO:0007744" key="20">
    <source>
    </source>
</evidence>
<evidence type="ECO:0007744" key="21">
    <source>
    </source>
</evidence>
<evidence type="ECO:0007744" key="22">
    <source>
    </source>
</evidence>
<evidence type="ECO:0007744" key="23">
    <source>
    </source>
</evidence>
<evidence type="ECO:0007744" key="24">
    <source>
    </source>
</evidence>
<evidence type="ECO:0007744" key="25">
    <source>
    </source>
</evidence>
<evidence type="ECO:0007744" key="26">
    <source>
    </source>
</evidence>
<keyword id="KW-0007">Acetylation</keyword>
<keyword id="KW-0025">Alternative splicing</keyword>
<keyword id="KW-0175">Coiled coil</keyword>
<keyword id="KW-0963">Cytoplasm</keyword>
<keyword id="KW-0967">Endosome</keyword>
<keyword id="KW-1017">Isopeptide bond</keyword>
<keyword id="KW-0551">Lipid droplet</keyword>
<keyword id="KW-0472">Membrane</keyword>
<keyword id="KW-0597">Phosphoprotein</keyword>
<keyword id="KW-1267">Proteomics identification</keyword>
<keyword id="KW-1185">Reference proteome</keyword>
<keyword id="KW-0813">Transport</keyword>
<keyword id="KW-0832">Ubl conjugation</keyword>
<dbReference type="EMBL" id="AF057140">
    <property type="protein sequence ID" value="AAC39751.1"/>
    <property type="molecule type" value="mRNA"/>
</dbReference>
<dbReference type="EMBL" id="AF055574">
    <property type="protein sequence ID" value="AAD11622.1"/>
    <property type="molecule type" value="mRNA"/>
</dbReference>
<dbReference type="EMBL" id="AF051314">
    <property type="protein sequence ID" value="AAD11619.1"/>
    <property type="molecule type" value="mRNA"/>
</dbReference>
<dbReference type="EMBL" id="AF051315">
    <property type="protein sequence ID" value="AAD11620.1"/>
    <property type="molecule type" value="mRNA"/>
</dbReference>
<dbReference type="EMBL" id="BT007235">
    <property type="protein sequence ID" value="AAP35899.1"/>
    <property type="molecule type" value="mRNA"/>
</dbReference>
<dbReference type="EMBL" id="AK291104">
    <property type="protein sequence ID" value="BAF83793.1"/>
    <property type="molecule type" value="mRNA"/>
</dbReference>
<dbReference type="EMBL" id="AK223054">
    <property type="protein sequence ID" value="BAD96774.1"/>
    <property type="molecule type" value="mRNA"/>
</dbReference>
<dbReference type="EMBL" id="AK225045">
    <property type="status" value="NOT_ANNOTATED_CDS"/>
    <property type="molecule type" value="mRNA"/>
</dbReference>
<dbReference type="EMBL" id="AC027319">
    <property type="status" value="NOT_ANNOTATED_CDS"/>
    <property type="molecule type" value="Genomic_DNA"/>
</dbReference>
<dbReference type="EMBL" id="BC001590">
    <property type="protein sequence ID" value="AAH01590.1"/>
    <property type="molecule type" value="mRNA"/>
</dbReference>
<dbReference type="EMBL" id="BC005818">
    <property type="protein sequence ID" value="AAH05818.1"/>
    <property type="molecule type" value="mRNA"/>
</dbReference>
<dbReference type="EMBL" id="BC007566">
    <property type="protein sequence ID" value="AAH07566.1"/>
    <property type="molecule type" value="mRNA"/>
</dbReference>
<dbReference type="EMBL" id="BC019278">
    <property type="protein sequence ID" value="AAH19278.1"/>
    <property type="molecule type" value="mRNA"/>
</dbReference>
<dbReference type="CCDS" id="CCDS12137.1">
    <molecule id="O60664-1"/>
</dbReference>
<dbReference type="CCDS" id="CCDS59337.1">
    <molecule id="O60664-4"/>
</dbReference>
<dbReference type="CCDS" id="CCDS59338.1">
    <molecule id="O60664-3"/>
</dbReference>
<dbReference type="RefSeq" id="NP_001157661.1">
    <molecule id="O60664-3"/>
    <property type="nucleotide sequence ID" value="NM_001164189.2"/>
</dbReference>
<dbReference type="RefSeq" id="NP_001157666.1">
    <molecule id="O60664-4"/>
    <property type="nucleotide sequence ID" value="NM_001164194.2"/>
</dbReference>
<dbReference type="RefSeq" id="NP_005808.3">
    <molecule id="O60664-1"/>
    <property type="nucleotide sequence ID" value="NM_005817.4"/>
</dbReference>
<dbReference type="SMR" id="O60664"/>
<dbReference type="BioGRID" id="115520">
    <property type="interactions" value="141"/>
</dbReference>
<dbReference type="CORUM" id="O60664"/>
<dbReference type="FunCoup" id="O60664">
    <property type="interactions" value="885"/>
</dbReference>
<dbReference type="IntAct" id="O60664">
    <property type="interactions" value="72"/>
</dbReference>
<dbReference type="MINT" id="O60664"/>
<dbReference type="STRING" id="9606.ENSP00000221957"/>
<dbReference type="ChEMBL" id="CHEMBL4523145"/>
<dbReference type="DrugBank" id="DB01271">
    <property type="generic name" value="Idursulfase"/>
</dbReference>
<dbReference type="GlyCosmos" id="O60664">
    <property type="glycosylation" value="3 sites, 1 glycan"/>
</dbReference>
<dbReference type="GlyGen" id="O60664">
    <property type="glycosylation" value="12 sites, 1 O-linked glycan (12 sites)"/>
</dbReference>
<dbReference type="iPTMnet" id="O60664"/>
<dbReference type="MetOSite" id="O60664"/>
<dbReference type="PhosphoSitePlus" id="O60664"/>
<dbReference type="SwissPalm" id="O60664"/>
<dbReference type="BioMuta" id="PLIN3"/>
<dbReference type="REPRODUCTION-2DPAGE" id="IPI00303882"/>
<dbReference type="CPTAC" id="CPTAC-111"/>
<dbReference type="CPTAC" id="CPTAC-112"/>
<dbReference type="jPOST" id="O60664"/>
<dbReference type="MassIVE" id="O60664"/>
<dbReference type="PaxDb" id="9606-ENSP00000221957"/>
<dbReference type="PeptideAtlas" id="O60664"/>
<dbReference type="PRIDE" id="O60664"/>
<dbReference type="ProteomicsDB" id="49508">
    <molecule id="O60664-1"/>
</dbReference>
<dbReference type="ProteomicsDB" id="49509">
    <molecule id="O60664-2"/>
</dbReference>
<dbReference type="ProteomicsDB" id="49510">
    <molecule id="O60664-3"/>
</dbReference>
<dbReference type="Pumba" id="O60664"/>
<dbReference type="TopDownProteomics" id="O60664-1">
    <molecule id="O60664-1"/>
</dbReference>
<dbReference type="TopDownProteomics" id="O60664-2">
    <molecule id="O60664-2"/>
</dbReference>
<dbReference type="TopDownProteomics" id="O60664-3">
    <molecule id="O60664-3"/>
</dbReference>
<dbReference type="Antibodypedia" id="1639">
    <property type="antibodies" value="592 antibodies from 38 providers"/>
</dbReference>
<dbReference type="DNASU" id="10226"/>
<dbReference type="Ensembl" id="ENST00000221957.9">
    <molecule id="O60664-1"/>
    <property type="protein sequence ID" value="ENSP00000221957.3"/>
    <property type="gene ID" value="ENSG00000105355.9"/>
</dbReference>
<dbReference type="Ensembl" id="ENST00000585479.5">
    <molecule id="O60664-3"/>
    <property type="protein sequence ID" value="ENSP00000465596.1"/>
    <property type="gene ID" value="ENSG00000105355.9"/>
</dbReference>
<dbReference type="Ensembl" id="ENST00000592528.5">
    <molecule id="O60664-4"/>
    <property type="protein sequence ID" value="ENSP00000467803.1"/>
    <property type="gene ID" value="ENSG00000105355.9"/>
</dbReference>
<dbReference type="GeneID" id="10226"/>
<dbReference type="KEGG" id="hsa:10226"/>
<dbReference type="MANE-Select" id="ENST00000221957.9">
    <property type="protein sequence ID" value="ENSP00000221957.3"/>
    <property type="RefSeq nucleotide sequence ID" value="NM_005817.5"/>
    <property type="RefSeq protein sequence ID" value="NP_005808.3"/>
</dbReference>
<dbReference type="UCSC" id="uc002mbj.3">
    <molecule id="O60664-1"/>
    <property type="organism name" value="human"/>
</dbReference>
<dbReference type="AGR" id="HGNC:16893"/>
<dbReference type="CTD" id="10226"/>
<dbReference type="DisGeNET" id="10226"/>
<dbReference type="GeneCards" id="PLIN3"/>
<dbReference type="HGNC" id="HGNC:16893">
    <property type="gene designation" value="PLIN3"/>
</dbReference>
<dbReference type="HPA" id="ENSG00000105355">
    <property type="expression patterns" value="Low tissue specificity"/>
</dbReference>
<dbReference type="MIM" id="602702">
    <property type="type" value="gene"/>
</dbReference>
<dbReference type="neXtProt" id="NX_O60664"/>
<dbReference type="OpenTargets" id="ENSG00000105355"/>
<dbReference type="PharmGKB" id="PA165394001"/>
<dbReference type="VEuPathDB" id="HostDB:ENSG00000105355"/>
<dbReference type="eggNOG" id="ENOG502R7TG">
    <property type="taxonomic scope" value="Eukaryota"/>
</dbReference>
<dbReference type="GeneTree" id="ENSGT00950000182920"/>
<dbReference type="HOGENOM" id="CLU_035133_0_1_1"/>
<dbReference type="InParanoid" id="O60664"/>
<dbReference type="OMA" id="WKEKQAG"/>
<dbReference type="OrthoDB" id="376826at2759"/>
<dbReference type="PAN-GO" id="O60664">
    <property type="GO annotations" value="4 GO annotations based on evolutionary models"/>
</dbReference>
<dbReference type="PhylomeDB" id="O60664"/>
<dbReference type="TreeFam" id="TF328397"/>
<dbReference type="PathwayCommons" id="O60664"/>
<dbReference type="Reactome" id="R-HSA-163560">
    <property type="pathway name" value="Triglyceride catabolism"/>
</dbReference>
<dbReference type="Reactome" id="R-HSA-6811440">
    <property type="pathway name" value="Retrograde transport at the Trans-Golgi-Network"/>
</dbReference>
<dbReference type="Reactome" id="R-HSA-9613354">
    <property type="pathway name" value="Lipophagy"/>
</dbReference>
<dbReference type="Reactome" id="R-HSA-9613829">
    <property type="pathway name" value="Chaperone Mediated Autophagy"/>
</dbReference>
<dbReference type="Reactome" id="R-HSA-9615710">
    <property type="pathway name" value="Late endosomal microautophagy"/>
</dbReference>
<dbReference type="Reactome" id="R-HSA-9706019">
    <property type="pathway name" value="RHOBTB3 ATPase cycle"/>
</dbReference>
<dbReference type="SignaLink" id="O60664"/>
<dbReference type="SIGNOR" id="O60664"/>
<dbReference type="BioGRID-ORCS" id="10226">
    <property type="hits" value="12 hits in 1169 CRISPR screens"/>
</dbReference>
<dbReference type="ChiTaRS" id="PLIN3">
    <property type="organism name" value="human"/>
</dbReference>
<dbReference type="GeneWiki" id="M6PRBP1"/>
<dbReference type="GenomeRNAi" id="10226"/>
<dbReference type="Pharos" id="O60664">
    <property type="development level" value="Tbio"/>
</dbReference>
<dbReference type="PRO" id="PR:O60664"/>
<dbReference type="Proteomes" id="UP000005640">
    <property type="component" value="Chromosome 19"/>
</dbReference>
<dbReference type="RNAct" id="O60664">
    <property type="molecule type" value="protein"/>
</dbReference>
<dbReference type="Bgee" id="ENSG00000105355">
    <property type="expression patterns" value="Expressed in pharyngeal mucosa and 206 other cell types or tissues"/>
</dbReference>
<dbReference type="ExpressionAtlas" id="O60664">
    <property type="expression patterns" value="baseline and differential"/>
</dbReference>
<dbReference type="GO" id="GO:0005737">
    <property type="term" value="C:cytoplasm"/>
    <property type="evidence" value="ECO:0000304"/>
    <property type="project" value="ProtInc"/>
</dbReference>
<dbReference type="GO" id="GO:0005829">
    <property type="term" value="C:cytosol"/>
    <property type="evidence" value="ECO:0000314"/>
    <property type="project" value="HPA"/>
</dbReference>
<dbReference type="GO" id="GO:0005768">
    <property type="term" value="C:endosome"/>
    <property type="evidence" value="ECO:0000304"/>
    <property type="project" value="ProtInc"/>
</dbReference>
<dbReference type="GO" id="GO:0010008">
    <property type="term" value="C:endosome membrane"/>
    <property type="evidence" value="ECO:0007669"/>
    <property type="project" value="UniProtKB-SubCell"/>
</dbReference>
<dbReference type="GO" id="GO:0005794">
    <property type="term" value="C:Golgi apparatus"/>
    <property type="evidence" value="ECO:0000304"/>
    <property type="project" value="ProtInc"/>
</dbReference>
<dbReference type="GO" id="GO:0005811">
    <property type="term" value="C:lipid droplet"/>
    <property type="evidence" value="ECO:0000314"/>
    <property type="project" value="HPA"/>
</dbReference>
<dbReference type="GO" id="GO:0016020">
    <property type="term" value="C:membrane"/>
    <property type="evidence" value="ECO:0007005"/>
    <property type="project" value="UniProtKB"/>
</dbReference>
<dbReference type="GO" id="GO:0030133">
    <property type="term" value="C:transport vesicle"/>
    <property type="evidence" value="ECO:0000304"/>
    <property type="project" value="Reactome"/>
</dbReference>
<dbReference type="GO" id="GO:0045296">
    <property type="term" value="F:cadherin binding"/>
    <property type="evidence" value="ECO:0007005"/>
    <property type="project" value="BHF-UCL"/>
</dbReference>
<dbReference type="GO" id="GO:0042149">
    <property type="term" value="P:cellular response to glucose starvation"/>
    <property type="evidence" value="ECO:0000314"/>
    <property type="project" value="UniProtKB"/>
</dbReference>
<dbReference type="GO" id="GO:1905691">
    <property type="term" value="P:lipid droplet disassembly"/>
    <property type="evidence" value="ECO:0000314"/>
    <property type="project" value="UniProtKB"/>
</dbReference>
<dbReference type="GO" id="GO:0019915">
    <property type="term" value="P:lipid storage"/>
    <property type="evidence" value="ECO:0000314"/>
    <property type="project" value="UniProtKB"/>
</dbReference>
<dbReference type="GO" id="GO:0010890">
    <property type="term" value="P:positive regulation of triglyceride storage"/>
    <property type="evidence" value="ECO:0000318"/>
    <property type="project" value="GO_Central"/>
</dbReference>
<dbReference type="GO" id="GO:0016192">
    <property type="term" value="P:vesicle-mediated transport"/>
    <property type="evidence" value="ECO:0000304"/>
    <property type="project" value="ProtInc"/>
</dbReference>
<dbReference type="FunFam" id="1.20.120.340:FF:000016">
    <property type="entry name" value="Perilipin"/>
    <property type="match status" value="1"/>
</dbReference>
<dbReference type="Gene3D" id="1.20.120.340">
    <property type="entry name" value="Flagellar protein FliS"/>
    <property type="match status" value="1"/>
</dbReference>
<dbReference type="Gene3D" id="3.30.720.170">
    <property type="entry name" value="Perilipin, alpha-beta domain"/>
    <property type="match status" value="1"/>
</dbReference>
<dbReference type="InterPro" id="IPR004279">
    <property type="entry name" value="Perilipin"/>
</dbReference>
<dbReference type="PANTHER" id="PTHR14024">
    <property type="entry name" value="PERILIPIN"/>
    <property type="match status" value="1"/>
</dbReference>
<dbReference type="PANTHER" id="PTHR14024:SF11">
    <property type="entry name" value="PERILIPIN-3"/>
    <property type="match status" value="1"/>
</dbReference>
<dbReference type="Pfam" id="PF03036">
    <property type="entry name" value="Perilipin"/>
    <property type="match status" value="1"/>
</dbReference>
<dbReference type="PIRSF" id="PIRSF036881">
    <property type="entry name" value="PAT"/>
    <property type="match status" value="1"/>
</dbReference>
<dbReference type="SUPFAM" id="SSF109775">
    <property type="entry name" value="Mannose-6-phosphate receptor binding protein 1 (Tip47), C-terminal domain"/>
    <property type="match status" value="1"/>
</dbReference>